<protein>
    <recommendedName>
        <fullName evidence="1">Large ribosomal subunit protein bL9</fullName>
    </recommendedName>
    <alternativeName>
        <fullName evidence="2">50S ribosomal protein L9</fullName>
    </alternativeName>
</protein>
<dbReference type="EMBL" id="BX908798">
    <property type="protein sequence ID" value="CAF24314.1"/>
    <property type="molecule type" value="Genomic_DNA"/>
</dbReference>
<dbReference type="RefSeq" id="WP_011176136.1">
    <property type="nucleotide sequence ID" value="NC_005861.2"/>
</dbReference>
<dbReference type="SMR" id="Q6MAT5"/>
<dbReference type="STRING" id="264201.pc1590"/>
<dbReference type="KEGG" id="pcu:PC_RS07615"/>
<dbReference type="eggNOG" id="COG0359">
    <property type="taxonomic scope" value="Bacteria"/>
</dbReference>
<dbReference type="HOGENOM" id="CLU_078938_3_0_0"/>
<dbReference type="OrthoDB" id="9788336at2"/>
<dbReference type="Proteomes" id="UP000000529">
    <property type="component" value="Chromosome"/>
</dbReference>
<dbReference type="GO" id="GO:1990904">
    <property type="term" value="C:ribonucleoprotein complex"/>
    <property type="evidence" value="ECO:0007669"/>
    <property type="project" value="UniProtKB-KW"/>
</dbReference>
<dbReference type="GO" id="GO:0005840">
    <property type="term" value="C:ribosome"/>
    <property type="evidence" value="ECO:0007669"/>
    <property type="project" value="UniProtKB-KW"/>
</dbReference>
<dbReference type="GO" id="GO:0019843">
    <property type="term" value="F:rRNA binding"/>
    <property type="evidence" value="ECO:0007669"/>
    <property type="project" value="UniProtKB-UniRule"/>
</dbReference>
<dbReference type="GO" id="GO:0003735">
    <property type="term" value="F:structural constituent of ribosome"/>
    <property type="evidence" value="ECO:0007669"/>
    <property type="project" value="InterPro"/>
</dbReference>
<dbReference type="GO" id="GO:0006412">
    <property type="term" value="P:translation"/>
    <property type="evidence" value="ECO:0007669"/>
    <property type="project" value="UniProtKB-UniRule"/>
</dbReference>
<dbReference type="Gene3D" id="3.10.430.100">
    <property type="entry name" value="Ribosomal protein L9, C-terminal domain"/>
    <property type="match status" value="1"/>
</dbReference>
<dbReference type="Gene3D" id="3.40.5.10">
    <property type="entry name" value="Ribosomal protein L9, N-terminal domain"/>
    <property type="match status" value="1"/>
</dbReference>
<dbReference type="HAMAP" id="MF_00503">
    <property type="entry name" value="Ribosomal_bL9"/>
    <property type="match status" value="1"/>
</dbReference>
<dbReference type="InterPro" id="IPR000244">
    <property type="entry name" value="Ribosomal_bL9"/>
</dbReference>
<dbReference type="InterPro" id="IPR009027">
    <property type="entry name" value="Ribosomal_bL9/RNase_H1_N"/>
</dbReference>
<dbReference type="InterPro" id="IPR020594">
    <property type="entry name" value="Ribosomal_bL9_bac/chp"/>
</dbReference>
<dbReference type="InterPro" id="IPR020069">
    <property type="entry name" value="Ribosomal_bL9_C"/>
</dbReference>
<dbReference type="InterPro" id="IPR036791">
    <property type="entry name" value="Ribosomal_bL9_C_sf"/>
</dbReference>
<dbReference type="InterPro" id="IPR020070">
    <property type="entry name" value="Ribosomal_bL9_N"/>
</dbReference>
<dbReference type="InterPro" id="IPR036935">
    <property type="entry name" value="Ribosomal_bL9_N_sf"/>
</dbReference>
<dbReference type="NCBIfam" id="TIGR00158">
    <property type="entry name" value="L9"/>
    <property type="match status" value="1"/>
</dbReference>
<dbReference type="PANTHER" id="PTHR21368">
    <property type="entry name" value="50S RIBOSOMAL PROTEIN L9"/>
    <property type="match status" value="1"/>
</dbReference>
<dbReference type="Pfam" id="PF03948">
    <property type="entry name" value="Ribosomal_L9_C"/>
    <property type="match status" value="1"/>
</dbReference>
<dbReference type="Pfam" id="PF01281">
    <property type="entry name" value="Ribosomal_L9_N"/>
    <property type="match status" value="1"/>
</dbReference>
<dbReference type="SUPFAM" id="SSF55658">
    <property type="entry name" value="L9 N-domain-like"/>
    <property type="match status" value="1"/>
</dbReference>
<dbReference type="SUPFAM" id="SSF55653">
    <property type="entry name" value="Ribosomal protein L9 C-domain"/>
    <property type="match status" value="1"/>
</dbReference>
<keyword id="KW-1185">Reference proteome</keyword>
<keyword id="KW-0687">Ribonucleoprotein</keyword>
<keyword id="KW-0689">Ribosomal protein</keyword>
<keyword id="KW-0694">RNA-binding</keyword>
<keyword id="KW-0699">rRNA-binding</keyword>
<comment type="function">
    <text evidence="1">Binds to the 23S rRNA.</text>
</comment>
<comment type="similarity">
    <text evidence="1">Belongs to the bacterial ribosomal protein bL9 family.</text>
</comment>
<evidence type="ECO:0000255" key="1">
    <source>
        <dbReference type="HAMAP-Rule" id="MF_00503"/>
    </source>
</evidence>
<evidence type="ECO:0000305" key="2"/>
<organism>
    <name type="scientific">Protochlamydia amoebophila (strain UWE25)</name>
    <dbReference type="NCBI Taxonomy" id="264201"/>
    <lineage>
        <taxon>Bacteria</taxon>
        <taxon>Pseudomonadati</taxon>
        <taxon>Chlamydiota</taxon>
        <taxon>Chlamydiia</taxon>
        <taxon>Parachlamydiales</taxon>
        <taxon>Parachlamydiaceae</taxon>
        <taxon>Candidatus Protochlamydia</taxon>
    </lineage>
</organism>
<gene>
    <name evidence="1" type="primary">rplI</name>
    <name type="ordered locus">pc1590</name>
</gene>
<reference key="1">
    <citation type="journal article" date="2004" name="Science">
        <title>Illuminating the evolutionary history of chlamydiae.</title>
        <authorList>
            <person name="Horn M."/>
            <person name="Collingro A."/>
            <person name="Schmitz-Esser S."/>
            <person name="Beier C.L."/>
            <person name="Purkhold U."/>
            <person name="Fartmann B."/>
            <person name="Brandt P."/>
            <person name="Nyakatura G.J."/>
            <person name="Droege M."/>
            <person name="Frishman D."/>
            <person name="Rattei T."/>
            <person name="Mewes H.-W."/>
            <person name="Wagner M."/>
        </authorList>
    </citation>
    <scope>NUCLEOTIDE SEQUENCE [LARGE SCALE GENOMIC DNA]</scope>
    <source>
        <strain>UWE25</strain>
    </source>
</reference>
<feature type="chain" id="PRO_0000236557" description="Large ribosomal subunit protein bL9">
    <location>
        <begin position="1"/>
        <end position="161"/>
    </location>
</feature>
<accession>Q6MAT5</accession>
<name>RL9_PARUW</name>
<sequence>MAQLLLIKDVEALGRSGEIVNVKPGFARNFLLPQSLAVIADKNTLRMQERLKAEREKRAIADKKESEAVAMQIEGMTLVQVVKVDQEGHMYGSVTVAEIVHLIQDHAKIELEKKDIQLKHPIKTTGVHSLVVKLKEGVTANFNLKVMSEEGYRTSLEEQKA</sequence>
<proteinExistence type="inferred from homology"/>